<comment type="function">
    <text evidence="1">Reversibly transfers an adenylyl group from ATP to 4'-phosphopantetheine, yielding dephospho-CoA (dPCoA) and pyrophosphate.</text>
</comment>
<comment type="catalytic activity">
    <reaction evidence="1">
        <text>(R)-4'-phosphopantetheine + ATP + H(+) = 3'-dephospho-CoA + diphosphate</text>
        <dbReference type="Rhea" id="RHEA:19801"/>
        <dbReference type="ChEBI" id="CHEBI:15378"/>
        <dbReference type="ChEBI" id="CHEBI:30616"/>
        <dbReference type="ChEBI" id="CHEBI:33019"/>
        <dbReference type="ChEBI" id="CHEBI:57328"/>
        <dbReference type="ChEBI" id="CHEBI:61723"/>
        <dbReference type="EC" id="2.7.7.3"/>
    </reaction>
</comment>
<comment type="cofactor">
    <cofactor evidence="1">
        <name>Mg(2+)</name>
        <dbReference type="ChEBI" id="CHEBI:18420"/>
    </cofactor>
</comment>
<comment type="pathway">
    <text evidence="1">Cofactor biosynthesis; coenzyme A biosynthesis; CoA from (R)-pantothenate: step 4/5.</text>
</comment>
<comment type="subunit">
    <text evidence="1">Homohexamer.</text>
</comment>
<comment type="subcellular location">
    <subcellularLocation>
        <location evidence="1">Cytoplasm</location>
    </subcellularLocation>
</comment>
<comment type="similarity">
    <text evidence="1">Belongs to the bacterial CoaD family.</text>
</comment>
<organism>
    <name type="scientific">Chlorobium phaeobacteroides (strain BS1)</name>
    <dbReference type="NCBI Taxonomy" id="331678"/>
    <lineage>
        <taxon>Bacteria</taxon>
        <taxon>Pseudomonadati</taxon>
        <taxon>Chlorobiota</taxon>
        <taxon>Chlorobiia</taxon>
        <taxon>Chlorobiales</taxon>
        <taxon>Chlorobiaceae</taxon>
        <taxon>Chlorobium/Pelodictyon group</taxon>
        <taxon>Chlorobium</taxon>
    </lineage>
</organism>
<protein>
    <recommendedName>
        <fullName evidence="1">Phosphopantetheine adenylyltransferase</fullName>
        <ecNumber evidence="1">2.7.7.3</ecNumber>
    </recommendedName>
    <alternativeName>
        <fullName evidence="1">Dephospho-CoA pyrophosphorylase</fullName>
    </alternativeName>
    <alternativeName>
        <fullName evidence="1">Pantetheine-phosphate adenylyltransferase</fullName>
        <shortName evidence="1">PPAT</shortName>
    </alternativeName>
</protein>
<keyword id="KW-0067">ATP-binding</keyword>
<keyword id="KW-0173">Coenzyme A biosynthesis</keyword>
<keyword id="KW-0963">Cytoplasm</keyword>
<keyword id="KW-0460">Magnesium</keyword>
<keyword id="KW-0547">Nucleotide-binding</keyword>
<keyword id="KW-0548">Nucleotidyltransferase</keyword>
<keyword id="KW-0808">Transferase</keyword>
<proteinExistence type="inferred from homology"/>
<name>COAD_CHLPB</name>
<accession>B3EQL4</accession>
<dbReference type="EC" id="2.7.7.3" evidence="1"/>
<dbReference type="EMBL" id="CP001101">
    <property type="protein sequence ID" value="ACE04047.1"/>
    <property type="molecule type" value="Genomic_DNA"/>
</dbReference>
<dbReference type="SMR" id="B3EQL4"/>
<dbReference type="STRING" id="331678.Cphamn1_1109"/>
<dbReference type="KEGG" id="cpb:Cphamn1_1109"/>
<dbReference type="eggNOG" id="COG0669">
    <property type="taxonomic scope" value="Bacteria"/>
</dbReference>
<dbReference type="HOGENOM" id="CLU_100149_0_1_10"/>
<dbReference type="OrthoDB" id="9806661at2"/>
<dbReference type="UniPathway" id="UPA00241">
    <property type="reaction ID" value="UER00355"/>
</dbReference>
<dbReference type="GO" id="GO:0005737">
    <property type="term" value="C:cytoplasm"/>
    <property type="evidence" value="ECO:0007669"/>
    <property type="project" value="UniProtKB-SubCell"/>
</dbReference>
<dbReference type="GO" id="GO:0005524">
    <property type="term" value="F:ATP binding"/>
    <property type="evidence" value="ECO:0007669"/>
    <property type="project" value="UniProtKB-KW"/>
</dbReference>
<dbReference type="GO" id="GO:0004595">
    <property type="term" value="F:pantetheine-phosphate adenylyltransferase activity"/>
    <property type="evidence" value="ECO:0007669"/>
    <property type="project" value="UniProtKB-UniRule"/>
</dbReference>
<dbReference type="GO" id="GO:0015937">
    <property type="term" value="P:coenzyme A biosynthetic process"/>
    <property type="evidence" value="ECO:0007669"/>
    <property type="project" value="UniProtKB-UniRule"/>
</dbReference>
<dbReference type="CDD" id="cd02163">
    <property type="entry name" value="PPAT"/>
    <property type="match status" value="1"/>
</dbReference>
<dbReference type="Gene3D" id="3.40.50.620">
    <property type="entry name" value="HUPs"/>
    <property type="match status" value="1"/>
</dbReference>
<dbReference type="HAMAP" id="MF_00151">
    <property type="entry name" value="PPAT_bact"/>
    <property type="match status" value="1"/>
</dbReference>
<dbReference type="InterPro" id="IPR004821">
    <property type="entry name" value="Cyt_trans-like"/>
</dbReference>
<dbReference type="InterPro" id="IPR001980">
    <property type="entry name" value="PPAT"/>
</dbReference>
<dbReference type="InterPro" id="IPR014729">
    <property type="entry name" value="Rossmann-like_a/b/a_fold"/>
</dbReference>
<dbReference type="NCBIfam" id="TIGR01510">
    <property type="entry name" value="coaD_prev_kdtB"/>
    <property type="match status" value="1"/>
</dbReference>
<dbReference type="NCBIfam" id="TIGR00125">
    <property type="entry name" value="cyt_tran_rel"/>
    <property type="match status" value="1"/>
</dbReference>
<dbReference type="PANTHER" id="PTHR21342">
    <property type="entry name" value="PHOSPHOPANTETHEINE ADENYLYLTRANSFERASE"/>
    <property type="match status" value="1"/>
</dbReference>
<dbReference type="PANTHER" id="PTHR21342:SF1">
    <property type="entry name" value="PHOSPHOPANTETHEINE ADENYLYLTRANSFERASE"/>
    <property type="match status" value="1"/>
</dbReference>
<dbReference type="Pfam" id="PF01467">
    <property type="entry name" value="CTP_transf_like"/>
    <property type="match status" value="1"/>
</dbReference>
<dbReference type="PRINTS" id="PR01020">
    <property type="entry name" value="LPSBIOSNTHSS"/>
</dbReference>
<dbReference type="SUPFAM" id="SSF52374">
    <property type="entry name" value="Nucleotidylyl transferase"/>
    <property type="match status" value="1"/>
</dbReference>
<reference key="1">
    <citation type="submission" date="2008-06" db="EMBL/GenBank/DDBJ databases">
        <title>Complete sequence of Chlorobium phaeobacteroides BS1.</title>
        <authorList>
            <consortium name="US DOE Joint Genome Institute"/>
            <person name="Lucas S."/>
            <person name="Copeland A."/>
            <person name="Lapidus A."/>
            <person name="Glavina del Rio T."/>
            <person name="Dalin E."/>
            <person name="Tice H."/>
            <person name="Bruce D."/>
            <person name="Goodwin L."/>
            <person name="Pitluck S."/>
            <person name="Schmutz J."/>
            <person name="Larimer F."/>
            <person name="Land M."/>
            <person name="Hauser L."/>
            <person name="Kyrpides N."/>
            <person name="Ovchinnikova G."/>
            <person name="Li T."/>
            <person name="Liu Z."/>
            <person name="Zhao F."/>
            <person name="Overmann J."/>
            <person name="Bryant D.A."/>
            <person name="Richardson P."/>
        </authorList>
    </citation>
    <scope>NUCLEOTIDE SEQUENCE [LARGE SCALE GENOMIC DNA]</scope>
    <source>
        <strain>BS1</strain>
    </source>
</reference>
<gene>
    <name evidence="1" type="primary">coaD</name>
    <name type="ordered locus">Cphamn1_1109</name>
</gene>
<evidence type="ECO:0000255" key="1">
    <source>
        <dbReference type="HAMAP-Rule" id="MF_00151"/>
    </source>
</evidence>
<feature type="chain" id="PRO_1000096778" description="Phosphopantetheine adenylyltransferase">
    <location>
        <begin position="1"/>
        <end position="165"/>
    </location>
</feature>
<feature type="binding site" evidence="1">
    <location>
        <begin position="10"/>
        <end position="11"/>
    </location>
    <ligand>
        <name>ATP</name>
        <dbReference type="ChEBI" id="CHEBI:30616"/>
    </ligand>
</feature>
<feature type="binding site" evidence="1">
    <location>
        <position position="10"/>
    </location>
    <ligand>
        <name>substrate</name>
    </ligand>
</feature>
<feature type="binding site" evidence="1">
    <location>
        <position position="18"/>
    </location>
    <ligand>
        <name>ATP</name>
        <dbReference type="ChEBI" id="CHEBI:30616"/>
    </ligand>
</feature>
<feature type="binding site" evidence="1">
    <location>
        <position position="42"/>
    </location>
    <ligand>
        <name>substrate</name>
    </ligand>
</feature>
<feature type="binding site" evidence="1">
    <location>
        <position position="75"/>
    </location>
    <ligand>
        <name>substrate</name>
    </ligand>
</feature>
<feature type="binding site" evidence="1">
    <location>
        <position position="89"/>
    </location>
    <ligand>
        <name>substrate</name>
    </ligand>
</feature>
<feature type="binding site" evidence="1">
    <location>
        <begin position="90"/>
        <end position="92"/>
    </location>
    <ligand>
        <name>ATP</name>
        <dbReference type="ChEBI" id="CHEBI:30616"/>
    </ligand>
</feature>
<feature type="binding site" evidence="1">
    <location>
        <position position="100"/>
    </location>
    <ligand>
        <name>ATP</name>
        <dbReference type="ChEBI" id="CHEBI:30616"/>
    </ligand>
</feature>
<feature type="binding site" evidence="1">
    <location>
        <begin position="125"/>
        <end position="131"/>
    </location>
    <ligand>
        <name>ATP</name>
        <dbReference type="ChEBI" id="CHEBI:30616"/>
    </ligand>
</feature>
<feature type="site" description="Transition state stabilizer" evidence="1">
    <location>
        <position position="18"/>
    </location>
</feature>
<sequence>MERLAIYPGTFDPFTNGHLDVLERALTIFDKVYIVLAENSKKSSLFTVDERCSMIREITASTSGVSVEVLHGGLLAEYAHSVGATAIVRGLRQVKDFEYEFQLSLLNRHLNPEVTTVFLMPNVKYTYVASSIIREVALLGGDVSKFVHPCVLAMLKKKYEEQNAQ</sequence>